<name>CCYL1_MOUSE</name>
<keyword id="KW-0025">Alternative splicing</keyword>
<keyword id="KW-1003">Cell membrane</keyword>
<keyword id="KW-0195">Cyclin</keyword>
<keyword id="KW-0221">Differentiation</keyword>
<keyword id="KW-0472">Membrane</keyword>
<keyword id="KW-0524">Neurogenesis</keyword>
<keyword id="KW-0597">Phosphoprotein</keyword>
<keyword id="KW-1185">Reference proteome</keyword>
<keyword id="KW-0744">Spermatogenesis</keyword>
<keyword id="KW-0879">Wnt signaling pathway</keyword>
<accession>D3YUJ3</accession>
<accession>E9Q226</accession>
<organism>
    <name type="scientific">Mus musculus</name>
    <name type="common">Mouse</name>
    <dbReference type="NCBI Taxonomy" id="10090"/>
    <lineage>
        <taxon>Eukaryota</taxon>
        <taxon>Metazoa</taxon>
        <taxon>Chordata</taxon>
        <taxon>Craniata</taxon>
        <taxon>Vertebrata</taxon>
        <taxon>Euteleostomi</taxon>
        <taxon>Mammalia</taxon>
        <taxon>Eutheria</taxon>
        <taxon>Euarchontoglires</taxon>
        <taxon>Glires</taxon>
        <taxon>Rodentia</taxon>
        <taxon>Myomorpha</taxon>
        <taxon>Muroidea</taxon>
        <taxon>Muridae</taxon>
        <taxon>Murinae</taxon>
        <taxon>Mus</taxon>
        <taxon>Mus</taxon>
    </lineage>
</organism>
<evidence type="ECO:0000250" key="1">
    <source>
        <dbReference type="UniProtKB" id="Q8N7R7"/>
    </source>
</evidence>
<evidence type="ECO:0000255" key="2"/>
<evidence type="ECO:0000269" key="3">
    <source>
    </source>
</evidence>
<evidence type="ECO:0000269" key="4">
    <source>
    </source>
</evidence>
<evidence type="ECO:0000269" key="5">
    <source>
    </source>
</evidence>
<evidence type="ECO:0000305" key="6"/>
<evidence type="ECO:0000312" key="7">
    <source>
        <dbReference type="MGI" id="MGI:2138614"/>
    </source>
</evidence>
<comment type="function">
    <text evidence="3 4 5">Key regulator of Wnt signaling implicated in various biological processes including male fertility, embryonic neurogenesis and cortex development (PubMed:26305884, PubMed:26590424, PubMed:34431536). Activates the cyclin-dependent kinase CDK16, and promotes sperm maturation (PubMed:26305884, PubMed:26590424).</text>
</comment>
<comment type="subunit">
    <text evidence="3">Interacts with CDK16; this interaction mutually increases the stability of CDK16 and CCNYL1 and increases the kinase activity of CDK16.</text>
</comment>
<comment type="interaction">
    <interactant intactId="EBI-11683033">
        <id>D3YUJ3</id>
    </interactant>
    <interactant intactId="EBI-11615670">
        <id>Q04735</id>
        <label>Cdk16</label>
    </interactant>
    <organismsDiffer>false</organismsDiffer>
    <experiments>7</experiments>
</comment>
<comment type="subcellular location">
    <subcellularLocation>
        <location evidence="3 4">Cell membrane</location>
    </subcellularLocation>
</comment>
<comment type="alternative products">
    <event type="alternative splicing"/>
    <isoform>
        <id>D3YUJ3-1</id>
        <name>1</name>
        <sequence type="displayed"/>
    </isoform>
    <isoform>
        <id>D3YUJ3-2</id>
        <name>2</name>
        <sequence type="described" ref="VSP_062247"/>
    </isoform>
</comment>
<comment type="tissue specificity">
    <text evidence="3 4">Highly expressed in the testis (PubMed:26305884, PubMed:26590424). Largely restricted to germ cells in the testis (PubMed:26590424).</text>
</comment>
<comment type="developmental stage">
    <text evidence="3">Up-regulated from the age of three weeks, and gradually reached a plateau at stages of sexual maturity.</text>
</comment>
<comment type="disruption phenotype">
    <text evidence="3 4 5">Deficient male mice are sterile, due to severe sperm structural and motility defects (PubMed:26305884, PubMed:26590424). CCNY and CCNYL1 double mutant mice undergo embryonic lethality beginning at embryonic day 14.5 (PubMed:34431536). At embryonic day 13.5, embryo display substantial neurogenesis defects including a thinner cerebral cortex and a reduced number of basal progenitors and postmitotic neurons (PubMed:34431536).</text>
</comment>
<comment type="similarity">
    <text evidence="6">Belongs to the cyclin family. Cyclin Y subfamily.</text>
</comment>
<proteinExistence type="evidence at protein level"/>
<gene>
    <name evidence="7" type="primary">Ccnyl1</name>
</gene>
<sequence length="367" mass="41600">METRIRAAQLKGRGGAFPKLGRRAGPAEPDYESEVYEAAAGDAVAVAPAPAAAVEPAELDFGAGEGHHLQHISDREMPEDLALESNPSDHPRASTIFLSKSQTDVREKRKSNHLNHVSPGQLTKKYSSCSTIFLDDSTVSQPNLRTTIKCVTLAIYYHIKNRDANRSLDIFDERSHPLTREKVPEEYFKHDPEHKFIYRFVRTLFSAAQLTAECAIVTLVYLERLLTYAEIDICPTNWKRIVLGAILLASKVWDDQAVWNVDYCQILKDITVEDMNEMERHFLELLQFNINVPASVYAKYYFDLRSLADDNNLNFLFAPLSKERAQNLEAISRLCEDKYKDLCRAAMRRSLSADNFIGIQRSNAILS</sequence>
<feature type="chain" id="PRO_0000459728" description="Cyclin-Y-like protein 1">
    <location>
        <begin position="1"/>
        <end position="367"/>
    </location>
</feature>
<feature type="domain" description="Cyclin N-terminal" evidence="2">
    <location>
        <begin position="186"/>
        <end position="291"/>
    </location>
</feature>
<feature type="modified residue" description="Phosphoserine" evidence="1">
    <location>
        <position position="73"/>
    </location>
</feature>
<feature type="modified residue" description="Phosphoserine" evidence="1">
    <location>
        <position position="111"/>
    </location>
</feature>
<feature type="modified residue" description="Phosphoserine" evidence="1">
    <location>
        <position position="118"/>
    </location>
</feature>
<feature type="modified residue" description="Phosphoserine" evidence="1">
    <location>
        <position position="352"/>
    </location>
</feature>
<feature type="splice variant" id="VSP_062247" description="In isoform 2.">
    <location>
        <begin position="1"/>
        <end position="76"/>
    </location>
</feature>
<reference key="1">
    <citation type="journal article" date="2009" name="PLoS Biol.">
        <title>Lineage-specific biology revealed by a finished genome assembly of the mouse.</title>
        <authorList>
            <person name="Church D.M."/>
            <person name="Goodstadt L."/>
            <person name="Hillier L.W."/>
            <person name="Zody M.C."/>
            <person name="Goldstein S."/>
            <person name="She X."/>
            <person name="Bult C.J."/>
            <person name="Agarwala R."/>
            <person name="Cherry J.L."/>
            <person name="DiCuccio M."/>
            <person name="Hlavina W."/>
            <person name="Kapustin Y."/>
            <person name="Meric P."/>
            <person name="Maglott D."/>
            <person name="Birtle Z."/>
            <person name="Marques A.C."/>
            <person name="Graves T."/>
            <person name="Zhou S."/>
            <person name="Teague B."/>
            <person name="Potamousis K."/>
            <person name="Churas C."/>
            <person name="Place M."/>
            <person name="Herschleb J."/>
            <person name="Runnheim R."/>
            <person name="Forrest D."/>
            <person name="Amos-Landgraf J."/>
            <person name="Schwartz D.C."/>
            <person name="Cheng Z."/>
            <person name="Lindblad-Toh K."/>
            <person name="Eichler E.E."/>
            <person name="Ponting C.P."/>
        </authorList>
    </citation>
    <scope>NUCLEOTIDE SEQUENCE [LARGE SCALE GENOMIC DNA]</scope>
    <source>
        <strain>C57BL/6J</strain>
    </source>
</reference>
<reference key="2">
    <citation type="journal article" date="2009" name="Immunity">
        <title>The phagosomal proteome in interferon-gamma-activated macrophages.</title>
        <authorList>
            <person name="Trost M."/>
            <person name="English L."/>
            <person name="Lemieux S."/>
            <person name="Courcelles M."/>
            <person name="Desjardins M."/>
            <person name="Thibault P."/>
        </authorList>
    </citation>
    <scope>IDENTIFICATION BY MASS SPECTROMETRY [LARGE SCALE ANALYSIS]</scope>
</reference>
<reference key="3">
    <citation type="journal article" date="2009" name="Mol. Cell. Proteomics">
        <title>Large scale localization of protein phosphorylation by use of electron capture dissociation mass spectrometry.</title>
        <authorList>
            <person name="Sweet S.M."/>
            <person name="Bailey C.M."/>
            <person name="Cunningham D.L."/>
            <person name="Heath J.K."/>
            <person name="Cooper H.J."/>
        </authorList>
    </citation>
    <scope>IDENTIFICATION BY MASS SPECTROMETRY [LARGE SCALE ANALYSIS]</scope>
</reference>
<reference key="4">
    <citation type="journal article" date="2010" name="Cell">
        <title>A tissue-specific atlas of mouse protein phosphorylation and expression.</title>
        <authorList>
            <person name="Huttlin E.L."/>
            <person name="Jedrychowski M.P."/>
            <person name="Elias J.E."/>
            <person name="Goswami T."/>
            <person name="Rad R."/>
            <person name="Beausoleil S.A."/>
            <person name="Villen J."/>
            <person name="Haas W."/>
            <person name="Sowa M.E."/>
            <person name="Gygi S.P."/>
        </authorList>
    </citation>
    <scope>IDENTIFICATION BY MASS SPECTROMETRY [LARGE SCALE ANALYSIS]</scope>
</reference>
<reference key="5">
    <citation type="journal article" date="2015" name="Cell">
        <title>Post-transcriptional Wnt Signaling Governs Epididymal Sperm Maturation.</title>
        <authorList>
            <person name="Koch S."/>
            <person name="Acebron S.P."/>
            <person name="Herbst J."/>
            <person name="Hatiboglu G."/>
            <person name="Niehrs C."/>
        </authorList>
    </citation>
    <scope>DISRUPTION PHENOTYPE</scope>
    <scope>FUNCTION</scope>
    <scope>SUBCELLULAR LOCATION</scope>
    <scope>TISSUE SPECIFICITY</scope>
</reference>
<reference key="6">
    <citation type="journal article" date="2015" name="PLoS Genet.">
        <title>CCNYL1, but Not CCNY, Cooperates with CDK16 to Regulate Spermatogenesis in Mouse.</title>
        <authorList>
            <person name="Zi Z."/>
            <person name="Zhang Z."/>
            <person name="Li Q."/>
            <person name="An W."/>
            <person name="Zeng L."/>
            <person name="Gao D."/>
            <person name="Yang Y."/>
            <person name="Zhu X."/>
            <person name="Zeng R."/>
            <person name="Shum W.W."/>
            <person name="Wu J."/>
        </authorList>
    </citation>
    <scope>DISRUPTION PHENOTYPE</scope>
    <scope>FUNCTION</scope>
    <scope>SUBCELLULAR LOCATION</scope>
    <scope>TISSUE SPECIFICITY</scope>
    <scope>DEVELOPMENTAL STAGE</scope>
    <scope>INTERACTION WITH CDK16</scope>
</reference>
<reference key="7">
    <citation type="journal article" date="2021" name="EMBO J.">
        <title>Mitotic WNT signalling orchestrates neurogenesis in the developing neocortex.</title>
        <authorList>
            <person name="Da Silva F."/>
            <person name="Zhang K."/>
            <person name="Pinson A."/>
            <person name="Fatti E."/>
            <person name="Wilsch-Braeuninger M."/>
            <person name="Herbst J."/>
            <person name="Vidal V."/>
            <person name="Schedl A."/>
            <person name="Huttner W.B."/>
            <person name="Niehrs C."/>
        </authorList>
    </citation>
    <scope>FUNCTION</scope>
    <scope>DISRUPTION PHENOTYPE</scope>
</reference>
<protein>
    <recommendedName>
        <fullName>Cyclin-Y-like protein 1</fullName>
    </recommendedName>
</protein>
<dbReference type="EMBL" id="AC101915">
    <property type="status" value="NOT_ANNOTATED_CDS"/>
    <property type="molecule type" value="Genomic_DNA"/>
</dbReference>
<dbReference type="CCDS" id="CCDS48281.1">
    <molecule id="D3YUJ3-2"/>
</dbReference>
<dbReference type="RefSeq" id="NP_001091113.1">
    <molecule id="D3YUJ3-2"/>
    <property type="nucleotide sequence ID" value="NM_001097644.1"/>
</dbReference>
<dbReference type="SMR" id="D3YUJ3"/>
<dbReference type="FunCoup" id="D3YUJ3">
    <property type="interactions" value="2001"/>
</dbReference>
<dbReference type="IntAct" id="D3YUJ3">
    <property type="interactions" value="1"/>
</dbReference>
<dbReference type="STRING" id="10090.ENSMUSP00000109711"/>
<dbReference type="PhosphoSitePlus" id="D3YUJ3"/>
<dbReference type="SwissPalm" id="D3YUJ3"/>
<dbReference type="jPOST" id="D3YUJ3"/>
<dbReference type="PaxDb" id="10090-ENSMUSP00000109711"/>
<dbReference type="PeptideAtlas" id="D3YUJ3"/>
<dbReference type="ProteomicsDB" id="343341"/>
<dbReference type="ProteomicsDB" id="361765"/>
<dbReference type="Antibodypedia" id="52166">
    <property type="antibodies" value="117 antibodies from 20 providers"/>
</dbReference>
<dbReference type="Ensembl" id="ENSMUST00000094898.5">
    <molecule id="D3YUJ3-2"/>
    <property type="protein sequence ID" value="ENSMUSP00000092499.4"/>
    <property type="gene ID" value="ENSMUSG00000070871.11"/>
</dbReference>
<dbReference type="Ensembl" id="ENSMUST00000114077.8">
    <molecule id="D3YUJ3-1"/>
    <property type="protein sequence ID" value="ENSMUSP00000109711.2"/>
    <property type="gene ID" value="ENSMUSG00000070871.11"/>
</dbReference>
<dbReference type="Ensembl" id="ENSMUST00000187170.7">
    <molecule id="D3YUJ3-2"/>
    <property type="protein sequence ID" value="ENSMUSP00000139498.2"/>
    <property type="gene ID" value="ENSMUSG00000070871.11"/>
</dbReference>
<dbReference type="GeneID" id="227210"/>
<dbReference type="KEGG" id="mmu:227210"/>
<dbReference type="AGR" id="MGI:2138614"/>
<dbReference type="CTD" id="151195"/>
<dbReference type="MGI" id="MGI:2138614">
    <property type="gene designation" value="Ccnyl1"/>
</dbReference>
<dbReference type="VEuPathDB" id="HostDB:ENSMUSG00000070871"/>
<dbReference type="eggNOG" id="KOG1675">
    <property type="taxonomic scope" value="Eukaryota"/>
</dbReference>
<dbReference type="GeneTree" id="ENSGT00940000154453"/>
<dbReference type="HOGENOM" id="CLU_055026_0_0_1"/>
<dbReference type="InParanoid" id="D3YUJ3"/>
<dbReference type="OMA" id="RWADAYQ"/>
<dbReference type="OrthoDB" id="10250320at2759"/>
<dbReference type="PhylomeDB" id="D3YUJ3"/>
<dbReference type="TreeFam" id="TF314464"/>
<dbReference type="BioGRID-ORCS" id="227210">
    <property type="hits" value="7 hits in 76 CRISPR screens"/>
</dbReference>
<dbReference type="ChiTaRS" id="Ccnyl1">
    <property type="organism name" value="mouse"/>
</dbReference>
<dbReference type="Proteomes" id="UP000000589">
    <property type="component" value="Chromosome 1"/>
</dbReference>
<dbReference type="RNAct" id="D3YUJ3">
    <property type="molecule type" value="protein"/>
</dbReference>
<dbReference type="Bgee" id="ENSMUSG00000070871">
    <property type="expression patterns" value="Expressed in secondary oocyte and 222 other cell types or tissues"/>
</dbReference>
<dbReference type="ExpressionAtlas" id="D3YUJ3">
    <property type="expression patterns" value="baseline and differential"/>
</dbReference>
<dbReference type="GO" id="GO:0016020">
    <property type="term" value="C:membrane"/>
    <property type="evidence" value="ECO:0000314"/>
    <property type="project" value="MGI"/>
</dbReference>
<dbReference type="GO" id="GO:0005886">
    <property type="term" value="C:plasma membrane"/>
    <property type="evidence" value="ECO:0000314"/>
    <property type="project" value="MGI"/>
</dbReference>
<dbReference type="GO" id="GO:0019901">
    <property type="term" value="F:protein kinase binding"/>
    <property type="evidence" value="ECO:0007669"/>
    <property type="project" value="InterPro"/>
</dbReference>
<dbReference type="GO" id="GO:0030317">
    <property type="term" value="P:flagellated sperm motility"/>
    <property type="evidence" value="ECO:0000315"/>
    <property type="project" value="MGI"/>
</dbReference>
<dbReference type="GO" id="GO:0022008">
    <property type="term" value="P:neurogenesis"/>
    <property type="evidence" value="ECO:0000315"/>
    <property type="project" value="UniProtKB"/>
</dbReference>
<dbReference type="GO" id="GO:0060828">
    <property type="term" value="P:regulation of canonical Wnt signaling pathway"/>
    <property type="evidence" value="ECO:0000315"/>
    <property type="project" value="UniProtKB"/>
</dbReference>
<dbReference type="GO" id="GO:0007283">
    <property type="term" value="P:spermatogenesis"/>
    <property type="evidence" value="ECO:0000315"/>
    <property type="project" value="MGI"/>
</dbReference>
<dbReference type="GO" id="GO:0016055">
    <property type="term" value="P:Wnt signaling pathway"/>
    <property type="evidence" value="ECO:0007669"/>
    <property type="project" value="UniProtKB-KW"/>
</dbReference>
<dbReference type="CDD" id="cd20540">
    <property type="entry name" value="CYCLIN_CCNY_like"/>
    <property type="match status" value="1"/>
</dbReference>
<dbReference type="FunFam" id="1.10.472.10:FF:000011">
    <property type="entry name" value="Cyclin-Y isoform 1"/>
    <property type="match status" value="1"/>
</dbReference>
<dbReference type="Gene3D" id="1.10.472.10">
    <property type="entry name" value="Cyclin-like"/>
    <property type="match status" value="1"/>
</dbReference>
<dbReference type="InterPro" id="IPR013763">
    <property type="entry name" value="Cyclin-like_dom"/>
</dbReference>
<dbReference type="InterPro" id="IPR036915">
    <property type="entry name" value="Cyclin-like_sf"/>
</dbReference>
<dbReference type="InterPro" id="IPR006671">
    <property type="entry name" value="Cyclin_N"/>
</dbReference>
<dbReference type="InterPro" id="IPR012399">
    <property type="entry name" value="Cyclin_Y"/>
</dbReference>
<dbReference type="PANTHER" id="PTHR14248">
    <property type="entry name" value="CYCLIN Y, ISOFORM A"/>
    <property type="match status" value="1"/>
</dbReference>
<dbReference type="Pfam" id="PF00134">
    <property type="entry name" value="Cyclin_N"/>
    <property type="match status" value="1"/>
</dbReference>
<dbReference type="PIRSF" id="PIRSF028934">
    <property type="entry name" value="Cyclin_CG14939"/>
    <property type="match status" value="1"/>
</dbReference>
<dbReference type="SMART" id="SM00385">
    <property type="entry name" value="CYCLIN"/>
    <property type="match status" value="1"/>
</dbReference>
<dbReference type="SUPFAM" id="SSF47954">
    <property type="entry name" value="Cyclin-like"/>
    <property type="match status" value="1"/>
</dbReference>